<keyword id="KW-0025">Alternative splicing</keyword>
<keyword id="KW-0131">Cell cycle</keyword>
<keyword id="KW-0158">Chromosome</keyword>
<keyword id="KW-0227">DNA damage</keyword>
<keyword id="KW-0234">DNA repair</keyword>
<keyword id="KW-0539">Nucleus</keyword>
<keyword id="KW-1185">Reference proteome</keyword>
<dbReference type="EMBL" id="DQ917672">
    <property type="protein sequence ID" value="ABK59968.1"/>
    <property type="molecule type" value="mRNA"/>
</dbReference>
<dbReference type="EMBL" id="DQ167217">
    <property type="protein sequence ID" value="ABA54896.1"/>
    <property type="molecule type" value="mRNA"/>
</dbReference>
<dbReference type="EMBL" id="AC021640">
    <property type="protein sequence ID" value="AAF32475.1"/>
    <property type="status" value="ALT_SEQ"/>
    <property type="molecule type" value="Genomic_DNA"/>
</dbReference>
<dbReference type="EMBL" id="CP002686">
    <property type="protein sequence ID" value="AEE73847.1"/>
    <property type="molecule type" value="Genomic_DNA"/>
</dbReference>
<dbReference type="RefSeq" id="NP_186917.2">
    <molecule id="Q0H8D7-1"/>
    <property type="nucleotide sequence ID" value="NM_111136.3"/>
</dbReference>
<dbReference type="FunCoup" id="Q0H8D7">
    <property type="interactions" value="1068"/>
</dbReference>
<dbReference type="STRING" id="3702.Q0H8D7"/>
<dbReference type="iPTMnet" id="Q0H8D7"/>
<dbReference type="PaxDb" id="3702-AT3G02680.1"/>
<dbReference type="ProteomicsDB" id="251201">
    <molecule id="Q0H8D7-1"/>
</dbReference>
<dbReference type="EnsemblPlants" id="AT3G02680.1">
    <molecule id="Q0H8D7-1"/>
    <property type="protein sequence ID" value="AT3G02680.1"/>
    <property type="gene ID" value="AT3G02680"/>
</dbReference>
<dbReference type="GeneID" id="821254"/>
<dbReference type="Gramene" id="AT3G02680.1">
    <molecule id="Q0H8D7-1"/>
    <property type="protein sequence ID" value="AT3G02680.1"/>
    <property type="gene ID" value="AT3G02680"/>
</dbReference>
<dbReference type="KEGG" id="ath:AT3G02680"/>
<dbReference type="Araport" id="AT3G02680"/>
<dbReference type="TAIR" id="AT3G02680">
    <property type="gene designation" value="NBS1"/>
</dbReference>
<dbReference type="eggNOG" id="ENOG502QQ7Y">
    <property type="taxonomic scope" value="Eukaryota"/>
</dbReference>
<dbReference type="HOGENOM" id="CLU_036857_0_0_1"/>
<dbReference type="InParanoid" id="Q0H8D7"/>
<dbReference type="OMA" id="RDETCHV"/>
<dbReference type="PhylomeDB" id="Q0H8D7"/>
<dbReference type="PRO" id="PR:Q0H8D7"/>
<dbReference type="Proteomes" id="UP000006548">
    <property type="component" value="Chromosome 3"/>
</dbReference>
<dbReference type="ExpressionAtlas" id="Q0H8D7">
    <property type="expression patterns" value="baseline and differential"/>
</dbReference>
<dbReference type="GO" id="GO:0005694">
    <property type="term" value="C:chromosome"/>
    <property type="evidence" value="ECO:0007669"/>
    <property type="project" value="UniProtKB-SubCell"/>
</dbReference>
<dbReference type="GO" id="GO:0030870">
    <property type="term" value="C:Mre11 complex"/>
    <property type="evidence" value="ECO:0007669"/>
    <property type="project" value="InterPro"/>
</dbReference>
<dbReference type="GO" id="GO:0071479">
    <property type="term" value="P:cellular response to ionizing radiation"/>
    <property type="evidence" value="ECO:0000270"/>
    <property type="project" value="UniProtKB"/>
</dbReference>
<dbReference type="GO" id="GO:0006974">
    <property type="term" value="P:DNA damage response"/>
    <property type="evidence" value="ECO:0000315"/>
    <property type="project" value="UniProtKB"/>
</dbReference>
<dbReference type="GO" id="GO:0000724">
    <property type="term" value="P:double-strand break repair via homologous recombination"/>
    <property type="evidence" value="ECO:0000315"/>
    <property type="project" value="UniProtKB"/>
</dbReference>
<dbReference type="GO" id="GO:0007095">
    <property type="term" value="P:mitotic G2 DNA damage checkpoint signaling"/>
    <property type="evidence" value="ECO:0007669"/>
    <property type="project" value="InterPro"/>
</dbReference>
<dbReference type="GO" id="GO:0006312">
    <property type="term" value="P:mitotic recombination"/>
    <property type="evidence" value="ECO:0000315"/>
    <property type="project" value="UniProtKB"/>
</dbReference>
<dbReference type="GO" id="GO:0007131">
    <property type="term" value="P:reciprocal meiotic recombination"/>
    <property type="evidence" value="ECO:0000315"/>
    <property type="project" value="UniProtKB"/>
</dbReference>
<dbReference type="CDD" id="cd00027">
    <property type="entry name" value="BRCT"/>
    <property type="match status" value="1"/>
</dbReference>
<dbReference type="CDD" id="cd22667">
    <property type="entry name" value="FHA_NBN"/>
    <property type="match status" value="1"/>
</dbReference>
<dbReference type="FunFam" id="2.60.200.20:FF:000017">
    <property type="entry name" value="Nibrin"/>
    <property type="match status" value="1"/>
</dbReference>
<dbReference type="Gene3D" id="2.60.200.20">
    <property type="match status" value="1"/>
</dbReference>
<dbReference type="Gene3D" id="3.40.50.10190">
    <property type="entry name" value="BRCT domain"/>
    <property type="match status" value="1"/>
</dbReference>
<dbReference type="InterPro" id="IPR036420">
    <property type="entry name" value="BRCT_dom_sf"/>
</dbReference>
<dbReference type="InterPro" id="IPR000253">
    <property type="entry name" value="FHA_dom"/>
</dbReference>
<dbReference type="InterPro" id="IPR040227">
    <property type="entry name" value="Nibrin-rel"/>
</dbReference>
<dbReference type="InterPro" id="IPR008984">
    <property type="entry name" value="SMAD_FHA_dom_sf"/>
</dbReference>
<dbReference type="PANTHER" id="PTHR12162:SF0">
    <property type="entry name" value="NIBRIN"/>
    <property type="match status" value="1"/>
</dbReference>
<dbReference type="PANTHER" id="PTHR12162">
    <property type="entry name" value="NIBRIN-RELATED"/>
    <property type="match status" value="1"/>
</dbReference>
<dbReference type="Pfam" id="PF00498">
    <property type="entry name" value="FHA"/>
    <property type="match status" value="1"/>
</dbReference>
<dbReference type="SUPFAM" id="SSF49879">
    <property type="entry name" value="SMAD/FHA domain"/>
    <property type="match status" value="1"/>
</dbReference>
<dbReference type="PROSITE" id="PS50006">
    <property type="entry name" value="FHA_DOMAIN"/>
    <property type="match status" value="1"/>
</dbReference>
<accession>Q0H8D7</accession>
<accession>A1YEB0</accession>
<accession>Q9M874</accession>
<reference key="1">
    <citation type="journal article" date="2007" name="Biochem. Biophys. Res. Commun.">
        <title>Characterization of the plant homolog of Nijmegen breakage syndrome 1: Involvement in DNA repair and recombination.</title>
        <authorList>
            <person name="Akutsu N."/>
            <person name="Iijima K."/>
            <person name="Hinata T."/>
            <person name="Tauchi H."/>
        </authorList>
    </citation>
    <scope>NUCLEOTIDE SEQUENCE [MRNA] (ISOFORM 2)</scope>
    <scope>INDUCTION BY X-RAYS</scope>
    <source>
        <strain>cv. Columbia</strain>
    </source>
</reference>
<reference key="2">
    <citation type="journal article" date="2007" name="Plant J.">
        <title>NBS1 is involved in DNA repair and plays a synergistic role with ATM in mediating meiotic homologous recombination in plants.</title>
        <authorList>
            <person name="Waterworth W.M."/>
            <person name="Altun C."/>
            <person name="Armstrong S.J."/>
            <person name="Roberts N."/>
            <person name="Dean P.J."/>
            <person name="Young K."/>
            <person name="Weil C.F."/>
            <person name="Bray C.M."/>
            <person name="West C.E."/>
        </authorList>
    </citation>
    <scope>NUCLEOTIDE SEQUENCE [MRNA] (ISOFORM 1)</scope>
    <scope>FUNCTION</scope>
    <scope>DISRUPTION PHENOTYPE</scope>
    <scope>INTERACTION WITH MRE11</scope>
    <scope>MUTAGENESIS OF 465-VAL--VAL-500</scope>
    <source>
        <strain>cv. Columbia</strain>
    </source>
</reference>
<reference key="3">
    <citation type="journal article" date="2000" name="Nature">
        <title>Sequence and analysis of chromosome 3 of the plant Arabidopsis thaliana.</title>
        <authorList>
            <person name="Salanoubat M."/>
            <person name="Lemcke K."/>
            <person name="Rieger M."/>
            <person name="Ansorge W."/>
            <person name="Unseld M."/>
            <person name="Fartmann B."/>
            <person name="Valle G."/>
            <person name="Bloecker H."/>
            <person name="Perez-Alonso M."/>
            <person name="Obermaier B."/>
            <person name="Delseny M."/>
            <person name="Boutry M."/>
            <person name="Grivell L.A."/>
            <person name="Mache R."/>
            <person name="Puigdomenech P."/>
            <person name="De Simone V."/>
            <person name="Choisne N."/>
            <person name="Artiguenave F."/>
            <person name="Robert C."/>
            <person name="Brottier P."/>
            <person name="Wincker P."/>
            <person name="Cattolico L."/>
            <person name="Weissenbach J."/>
            <person name="Saurin W."/>
            <person name="Quetier F."/>
            <person name="Schaefer M."/>
            <person name="Mueller-Auer S."/>
            <person name="Gabel C."/>
            <person name="Fuchs M."/>
            <person name="Benes V."/>
            <person name="Wurmbach E."/>
            <person name="Drzonek H."/>
            <person name="Erfle H."/>
            <person name="Jordan N."/>
            <person name="Bangert S."/>
            <person name="Wiedelmann R."/>
            <person name="Kranz H."/>
            <person name="Voss H."/>
            <person name="Holland R."/>
            <person name="Brandt P."/>
            <person name="Nyakatura G."/>
            <person name="Vezzi A."/>
            <person name="D'Angelo M."/>
            <person name="Pallavicini A."/>
            <person name="Toppo S."/>
            <person name="Simionati B."/>
            <person name="Conrad A."/>
            <person name="Hornischer K."/>
            <person name="Kauer G."/>
            <person name="Loehnert T.-H."/>
            <person name="Nordsiek G."/>
            <person name="Reichelt J."/>
            <person name="Scharfe M."/>
            <person name="Schoen O."/>
            <person name="Bargues M."/>
            <person name="Terol J."/>
            <person name="Climent J."/>
            <person name="Navarro P."/>
            <person name="Collado C."/>
            <person name="Perez-Perez A."/>
            <person name="Ottenwaelder B."/>
            <person name="Duchemin D."/>
            <person name="Cooke R."/>
            <person name="Laudie M."/>
            <person name="Berger-Llauro C."/>
            <person name="Purnelle B."/>
            <person name="Masuy D."/>
            <person name="de Haan M."/>
            <person name="Maarse A.C."/>
            <person name="Alcaraz J.-P."/>
            <person name="Cottet A."/>
            <person name="Casacuberta E."/>
            <person name="Monfort A."/>
            <person name="Argiriou A."/>
            <person name="Flores M."/>
            <person name="Liguori R."/>
            <person name="Vitale D."/>
            <person name="Mannhaupt G."/>
            <person name="Haase D."/>
            <person name="Schoof H."/>
            <person name="Rudd S."/>
            <person name="Zaccaria P."/>
            <person name="Mewes H.-W."/>
            <person name="Mayer K.F.X."/>
            <person name="Kaul S."/>
            <person name="Town C.D."/>
            <person name="Koo H.L."/>
            <person name="Tallon L.J."/>
            <person name="Jenkins J."/>
            <person name="Rooney T."/>
            <person name="Rizzo M."/>
            <person name="Walts A."/>
            <person name="Utterback T."/>
            <person name="Fujii C.Y."/>
            <person name="Shea T.P."/>
            <person name="Creasy T.H."/>
            <person name="Haas B."/>
            <person name="Maiti R."/>
            <person name="Wu D."/>
            <person name="Peterson J."/>
            <person name="Van Aken S."/>
            <person name="Pai G."/>
            <person name="Militscher J."/>
            <person name="Sellers P."/>
            <person name="Gill J.E."/>
            <person name="Feldblyum T.V."/>
            <person name="Preuss D."/>
            <person name="Lin X."/>
            <person name="Nierman W.C."/>
            <person name="Salzberg S.L."/>
            <person name="White O."/>
            <person name="Venter J.C."/>
            <person name="Fraser C.M."/>
            <person name="Kaneko T."/>
            <person name="Nakamura Y."/>
            <person name="Sato S."/>
            <person name="Kato T."/>
            <person name="Asamizu E."/>
            <person name="Sasamoto S."/>
            <person name="Kimura T."/>
            <person name="Idesawa K."/>
            <person name="Kawashima K."/>
            <person name="Kishida Y."/>
            <person name="Kiyokawa C."/>
            <person name="Kohara M."/>
            <person name="Matsumoto M."/>
            <person name="Matsuno A."/>
            <person name="Muraki A."/>
            <person name="Nakayama S."/>
            <person name="Nakazaki N."/>
            <person name="Shinpo S."/>
            <person name="Takeuchi C."/>
            <person name="Wada T."/>
            <person name="Watanabe A."/>
            <person name="Yamada M."/>
            <person name="Yasuda M."/>
            <person name="Tabata S."/>
        </authorList>
    </citation>
    <scope>NUCLEOTIDE SEQUENCE [LARGE SCALE GENOMIC DNA]</scope>
    <source>
        <strain>cv. Columbia</strain>
    </source>
</reference>
<reference key="4">
    <citation type="journal article" date="2017" name="Plant J.">
        <title>Araport11: a complete reannotation of the Arabidopsis thaliana reference genome.</title>
        <authorList>
            <person name="Cheng C.Y."/>
            <person name="Krishnakumar V."/>
            <person name="Chan A.P."/>
            <person name="Thibaud-Nissen F."/>
            <person name="Schobel S."/>
            <person name="Town C.D."/>
        </authorList>
    </citation>
    <scope>GENOME REANNOTATION</scope>
    <source>
        <strain>cv. Columbia</strain>
    </source>
</reference>
<reference key="5">
    <citation type="journal article" date="2006" name="DNA Repair">
        <title>Recent advances in understanding of the DNA double-strand break repair machinery of plants.</title>
        <authorList>
            <person name="Bleuyard J.Y."/>
            <person name="Gallego M.E."/>
            <person name="White C.I."/>
        </authorList>
    </citation>
    <scope>REVIEW ON DNA REPAIR</scope>
</reference>
<gene>
    <name evidence="7" type="primary">NBS1</name>
    <name evidence="10" type="ordered locus">At3g02680</name>
    <name evidence="11" type="ORF">F16B3.31</name>
</gene>
<feature type="chain" id="PRO_0000430944" description="Nibrin homolog">
    <location>
        <begin position="1"/>
        <end position="542"/>
    </location>
</feature>
<feature type="domain" description="FHA" evidence="3">
    <location>
        <begin position="25"/>
        <end position="90"/>
    </location>
</feature>
<feature type="domain" description="BRCT" evidence="2">
    <location>
        <begin position="119"/>
        <end position="195"/>
    </location>
</feature>
<feature type="region of interest" description="Disordered" evidence="4">
    <location>
        <begin position="409"/>
        <end position="430"/>
    </location>
</feature>
<feature type="region of interest" description="Involved in MRE11-binding" evidence="6">
    <location>
        <begin position="465"/>
        <end position="500"/>
    </location>
</feature>
<feature type="splice variant" id="VSP_057110" description="In isoform 2.">
    <location>
        <begin position="334"/>
        <end position="342"/>
    </location>
</feature>
<feature type="mutagenesis site" description="Impaired MRE11-binding." evidence="6">
    <location>
        <begin position="465"/>
        <end position="500"/>
    </location>
</feature>
<proteinExistence type="evidence at protein level"/>
<evidence type="ECO:0000250" key="1">
    <source>
        <dbReference type="UniProtKB" id="O60934"/>
    </source>
</evidence>
<evidence type="ECO:0000255" key="2">
    <source>
        <dbReference type="PROSITE-ProRule" id="PRU00033"/>
    </source>
</evidence>
<evidence type="ECO:0000255" key="3">
    <source>
        <dbReference type="PROSITE-ProRule" id="PRU00086"/>
    </source>
</evidence>
<evidence type="ECO:0000256" key="4">
    <source>
        <dbReference type="SAM" id="MobiDB-lite"/>
    </source>
</evidence>
<evidence type="ECO:0000269" key="5">
    <source>
    </source>
</evidence>
<evidence type="ECO:0000269" key="6">
    <source>
    </source>
</evidence>
<evidence type="ECO:0000303" key="7">
    <source>
    </source>
</evidence>
<evidence type="ECO:0000305" key="8"/>
<evidence type="ECO:0000305" key="9">
    <source>
    </source>
</evidence>
<evidence type="ECO:0000312" key="10">
    <source>
        <dbReference type="Araport" id="AT3G02680"/>
    </source>
</evidence>
<evidence type="ECO:0000312" key="11">
    <source>
        <dbReference type="EMBL" id="AAF32475.1"/>
    </source>
</evidence>
<evidence type="ECO:0000312" key="12">
    <source>
        <dbReference type="EMBL" id="ABA54896.1"/>
    </source>
</evidence>
<organism evidence="12">
    <name type="scientific">Arabidopsis thaliana</name>
    <name type="common">Mouse-ear cress</name>
    <dbReference type="NCBI Taxonomy" id="3702"/>
    <lineage>
        <taxon>Eukaryota</taxon>
        <taxon>Viridiplantae</taxon>
        <taxon>Streptophyta</taxon>
        <taxon>Embryophyta</taxon>
        <taxon>Tracheophyta</taxon>
        <taxon>Spermatophyta</taxon>
        <taxon>Magnoliopsida</taxon>
        <taxon>eudicotyledons</taxon>
        <taxon>Gunneridae</taxon>
        <taxon>Pentapetalae</taxon>
        <taxon>rosids</taxon>
        <taxon>malvids</taxon>
        <taxon>Brassicales</taxon>
        <taxon>Brassicaceae</taxon>
        <taxon>Camelineae</taxon>
        <taxon>Arabidopsis</taxon>
    </lineage>
</organism>
<comment type="function">
    <text evidence="1 6">Component of the MRN complex, which plays a central role in double-strand break (DSB) repair, DNA recombination, maintenance of telomere integrity and meiosis (PubMed:17672843). The MRN complex is involved in the repair of DNA double-strand breaks (DSBs) via homologous recombination (HR), an error-free mechanism which primarily occurs during S and G2 phases (PubMed:17672843). The complex (1) mediates the end resection of damaged DNA, which generates proper single-stranded DNA, a key initial steps in HR, and is (2) required for the recruitment of other repair factors and efficient activation of ATM and ATR upon DNA damage (By similarity). The MRN complex possesses single-strand endonuclease activity and double-strand-specific 3'-5' exonuclease activity, which are provided by MRE11, to initiate end resection, which is required for single-strand invasion and recombination (By similarity). Within the MRN complex, NBS1 acts as a protein-protein adapter, which specifically recognizes and binds phosphorylated proteins, promoting their recruitment to DNA damage sites (By similarity). Recruits MRE11 and RAD50 components of the MRN complex to DSBs in response to DNA damage (By similarity).</text>
</comment>
<comment type="subunit">
    <text evidence="9">Component of the MRN complex composed of two heterodimers RAD50 and MRE11 associated with a single NBS1.</text>
</comment>
<comment type="subcellular location">
    <subcellularLocation>
        <location evidence="1">Nucleus</location>
    </subcellularLocation>
    <subcellularLocation>
        <location evidence="1">Chromosome</location>
    </subcellularLocation>
    <text evidence="1">Localizes to DNA double-strand breaks (DSBs).</text>
</comment>
<comment type="alternative products">
    <event type="alternative splicing"/>
    <isoform>
        <id>Q0H8D7-1</id>
        <name>1</name>
        <sequence type="displayed"/>
    </isoform>
    <isoform>
        <id>Q0H8D7-2</id>
        <name>2</name>
        <sequence type="described" ref="VSP_057110"/>
    </isoform>
</comment>
<comment type="induction">
    <text evidence="5">By X-rays.</text>
</comment>
<comment type="domain">
    <text evidence="1">The FHA and BRCT domains are likely to have a crucial role for both binding to histone H2AFX and for relocalization of MRE11/RAD50 complex to the vicinity of DNA damage.</text>
</comment>
<comment type="disruption phenotype">
    <text evidence="6">Hypersensitivity to the DNA cross-linking reagent mitomycin C.</text>
</comment>
<comment type="similarity">
    <text evidence="8">Belongs to the Nibrin family.</text>
</comment>
<comment type="sequence caution" evidence="8">
    <conflict type="erroneous gene model prediction">
        <sequence resource="EMBL-CDS" id="AAF32475"/>
    </conflict>
</comment>
<protein>
    <recommendedName>
        <fullName evidence="8">Nibrin homolog</fullName>
    </recommendedName>
    <alternativeName>
        <fullName evidence="7">Nijmegen breakage syndrome 1 protein</fullName>
        <shortName evidence="7">AtNbs1</shortName>
    </alternativeName>
</protein>
<name>NBS1_ARATH</name>
<sequence>MVWGLFPVDPLSGEDKYYIFSKGIYKVGRKGCDIIINKDKGVSRIHAELTFDATTVSTSRRNKSSSDTSSFVIRVKDCSKYGTFVKTDLGTKDKVHELSNKEKILQDGDVIAFGTGSAIYRLSLIPLVFYLCPSSETFKVDQPVQDAVSSIGARISPTLSEECTHVLLEPRMQVNEALINAILAKKTIILTNWVMLLAEKSICSEIPGYSQYRPSVMVEEALVDVLELNVREKCLEGFTFVLEPTDTYRFGCSFPSLLEVCGAETVTIEDISSMSQDSQFGEINRMICVIPKSAGDKFGRFKHLSLLSRVNEMDLVCAVFSGNLPSTSLIPPSVVISSSCSTDETVVADSEAEEEETTSSVHMIDATEKAETPEKPAAIVIEDSPVTILEETSNLNEFKSVNLLADTESRGHMDEKNSSDSVTIRRDRNDEAETGKSEIIYTQDLIVRDLRSTRKVQSTGGEGVVDFKRFRKGNVTCGNSFSSLIPFAKDPYKEYDSWDVTDFMKEEKKRKQMEAIAEDLFKTEKARKRGTAGSIRGFLSGS</sequence>